<sequence>MTQRWGPQRLAGGQPQAGLEESTQASIFTYTNSNATRDPFEGPNYHIAPRWVYHLTSAWMIFVVIASVFTNGLVLVATMRFKKLRHPLNWILVNLAIADLAETIIASTISVVNQIYGYFVLGHPLCVVEGYTVSLCGITGLWSLAIISWERWLVVCKPFGNVRFDAKLAIAGIAFSWIWAAVWTAPPIFGWSRYWPHGLKTSCGPDVFSGSSYPGVQSYMIVLMTTCCIIPLSVIILCYLQVWLAIRAVAKQQKESESTQKAEKEVTRMVVVMVLAYCLCWGPYTFFACFAAAHPGYAFHPLVAALPAYFAKSATIYNPIIYVFMNRQFRNCILQLFGKKVDDSSELSSASRTEASSVSSVSPA</sequence>
<protein>
    <recommendedName>
        <fullName>Long-wave-sensitive opsin 1</fullName>
    </recommendedName>
    <alternativeName>
        <fullName>Red cone photoreceptor pigment</fullName>
    </alternativeName>
    <alternativeName>
        <fullName>Red-sensitive opsin</fullName>
    </alternativeName>
</protein>
<organism>
    <name type="scientific">Canis lupus familiaris</name>
    <name type="common">Dog</name>
    <name type="synonym">Canis familiaris</name>
    <dbReference type="NCBI Taxonomy" id="9615"/>
    <lineage>
        <taxon>Eukaryota</taxon>
        <taxon>Metazoa</taxon>
        <taxon>Chordata</taxon>
        <taxon>Craniata</taxon>
        <taxon>Vertebrata</taxon>
        <taxon>Euteleostomi</taxon>
        <taxon>Mammalia</taxon>
        <taxon>Eutheria</taxon>
        <taxon>Laurasiatheria</taxon>
        <taxon>Carnivora</taxon>
        <taxon>Caniformia</taxon>
        <taxon>Canidae</taxon>
        <taxon>Canis</taxon>
    </lineage>
</organism>
<accession>O18914</accession>
<keyword id="KW-0157">Chromophore</keyword>
<keyword id="KW-1015">Disulfide bond</keyword>
<keyword id="KW-0297">G-protein coupled receptor</keyword>
<keyword id="KW-0325">Glycoprotein</keyword>
<keyword id="KW-0472">Membrane</keyword>
<keyword id="KW-0597">Phosphoprotein</keyword>
<keyword id="KW-0600">Photoreceptor protein</keyword>
<keyword id="KW-0675">Receptor</keyword>
<keyword id="KW-1185">Reference proteome</keyword>
<keyword id="KW-0681">Retinal protein</keyword>
<keyword id="KW-0716">Sensory transduction</keyword>
<keyword id="KW-0807">Transducer</keyword>
<keyword id="KW-0812">Transmembrane</keyword>
<keyword id="KW-1133">Transmembrane helix</keyword>
<keyword id="KW-0844">Vision</keyword>
<dbReference type="EMBL" id="AAEX02003750">
    <property type="status" value="NOT_ANNOTATED_CDS"/>
    <property type="molecule type" value="Genomic_DNA"/>
</dbReference>
<dbReference type="EMBL" id="AF031533">
    <property type="protein sequence ID" value="AAB86633.1"/>
    <property type="molecule type" value="mRNA"/>
</dbReference>
<dbReference type="RefSeq" id="NP_001184001.1">
    <property type="nucleotide sequence ID" value="NM_001197072.1"/>
</dbReference>
<dbReference type="SMR" id="O18914"/>
<dbReference type="FunCoup" id="O18914">
    <property type="interactions" value="172"/>
</dbReference>
<dbReference type="STRING" id="9615.ENSCAFP00000028751"/>
<dbReference type="GlyCosmos" id="O18914">
    <property type="glycosylation" value="2 sites, No reported glycans"/>
</dbReference>
<dbReference type="PaxDb" id="9612-ENSCAFP00000028751"/>
<dbReference type="Ensembl" id="ENSCAFT00000030917.4">
    <property type="protein sequence ID" value="ENSCAFP00000028751.3"/>
    <property type="gene ID" value="ENSCAFG00000019441.4"/>
</dbReference>
<dbReference type="Ensembl" id="ENSCAFT00030025122.1">
    <property type="protein sequence ID" value="ENSCAFP00030021935.1"/>
    <property type="gene ID" value="ENSCAFG00030013561.1"/>
</dbReference>
<dbReference type="Ensembl" id="ENSCAFT00040038322.1">
    <property type="protein sequence ID" value="ENSCAFP00040033419.1"/>
    <property type="gene ID" value="ENSCAFG00040020698.1"/>
</dbReference>
<dbReference type="Ensembl" id="ENSCAFT00845048208.1">
    <property type="protein sequence ID" value="ENSCAFP00845037811.1"/>
    <property type="gene ID" value="ENSCAFG00845027363.1"/>
</dbReference>
<dbReference type="GeneID" id="403778"/>
<dbReference type="KEGG" id="cfa:403778"/>
<dbReference type="CTD" id="5956"/>
<dbReference type="VEuPathDB" id="HostDB:ENSCAFG00845027363"/>
<dbReference type="eggNOG" id="KOG3656">
    <property type="taxonomic scope" value="Eukaryota"/>
</dbReference>
<dbReference type="GeneTree" id="ENSGT01030000234549"/>
<dbReference type="InParanoid" id="O18914"/>
<dbReference type="OrthoDB" id="8545112at2759"/>
<dbReference type="Reactome" id="R-CFA-2187335">
    <property type="pathway name" value="The retinoid cycle in cones (daylight vision)"/>
</dbReference>
<dbReference type="Reactome" id="R-CFA-418594">
    <property type="pathway name" value="G alpha (i) signalling events"/>
</dbReference>
<dbReference type="Reactome" id="R-CFA-419771">
    <property type="pathway name" value="Opsins"/>
</dbReference>
<dbReference type="Proteomes" id="UP000002254">
    <property type="component" value="Chromosome X"/>
</dbReference>
<dbReference type="Proteomes" id="UP000694429">
    <property type="component" value="Unassembled WGS sequence"/>
</dbReference>
<dbReference type="Proteomes" id="UP000694542">
    <property type="component" value="Chromosome X"/>
</dbReference>
<dbReference type="Proteomes" id="UP000805418">
    <property type="component" value="Chromosome X"/>
</dbReference>
<dbReference type="Bgee" id="ENSCAFG00000019441">
    <property type="expression patterns" value="Expressed in urinary bladder"/>
</dbReference>
<dbReference type="GO" id="GO:0001750">
    <property type="term" value="C:photoreceptor outer segment"/>
    <property type="evidence" value="ECO:0000318"/>
    <property type="project" value="GO_Central"/>
</dbReference>
<dbReference type="GO" id="GO:0005886">
    <property type="term" value="C:plasma membrane"/>
    <property type="evidence" value="ECO:0000318"/>
    <property type="project" value="GO_Central"/>
</dbReference>
<dbReference type="GO" id="GO:0008020">
    <property type="term" value="F:G protein-coupled photoreceptor activity"/>
    <property type="evidence" value="ECO:0000318"/>
    <property type="project" value="GO_Central"/>
</dbReference>
<dbReference type="GO" id="GO:0071482">
    <property type="term" value="P:cellular response to light stimulus"/>
    <property type="evidence" value="ECO:0000318"/>
    <property type="project" value="GO_Central"/>
</dbReference>
<dbReference type="GO" id="GO:0007186">
    <property type="term" value="P:G protein-coupled receptor signaling pathway"/>
    <property type="evidence" value="ECO:0000318"/>
    <property type="project" value="GO_Central"/>
</dbReference>
<dbReference type="GO" id="GO:0007602">
    <property type="term" value="P:phototransduction"/>
    <property type="evidence" value="ECO:0000318"/>
    <property type="project" value="GO_Central"/>
</dbReference>
<dbReference type="GO" id="GO:0007601">
    <property type="term" value="P:visual perception"/>
    <property type="evidence" value="ECO:0007669"/>
    <property type="project" value="UniProtKB-KW"/>
</dbReference>
<dbReference type="FunFam" id="1.20.1070.10:FF:000090">
    <property type="entry name" value="Long-wave-sensitive opsin 1"/>
    <property type="match status" value="1"/>
</dbReference>
<dbReference type="Gene3D" id="1.20.1070.10">
    <property type="entry name" value="Rhodopsin 7-helix transmembrane proteins"/>
    <property type="match status" value="1"/>
</dbReference>
<dbReference type="InterPro" id="IPR050125">
    <property type="entry name" value="GPCR_opsins"/>
</dbReference>
<dbReference type="InterPro" id="IPR000276">
    <property type="entry name" value="GPCR_Rhodpsn"/>
</dbReference>
<dbReference type="InterPro" id="IPR017452">
    <property type="entry name" value="GPCR_Rhodpsn_7TM"/>
</dbReference>
<dbReference type="InterPro" id="IPR001760">
    <property type="entry name" value="Opsin"/>
</dbReference>
<dbReference type="InterPro" id="IPR000378">
    <property type="entry name" value="Opsin_red/grn"/>
</dbReference>
<dbReference type="InterPro" id="IPR027430">
    <property type="entry name" value="Retinal_BS"/>
</dbReference>
<dbReference type="PANTHER" id="PTHR24240">
    <property type="entry name" value="OPSIN"/>
    <property type="match status" value="1"/>
</dbReference>
<dbReference type="Pfam" id="PF00001">
    <property type="entry name" value="7tm_1"/>
    <property type="match status" value="1"/>
</dbReference>
<dbReference type="PRINTS" id="PR00237">
    <property type="entry name" value="GPCRRHODOPSN"/>
</dbReference>
<dbReference type="PRINTS" id="PR00238">
    <property type="entry name" value="OPSIN"/>
</dbReference>
<dbReference type="PRINTS" id="PR00575">
    <property type="entry name" value="OPSINREDGRN"/>
</dbReference>
<dbReference type="SMART" id="SM01381">
    <property type="entry name" value="7TM_GPCR_Srsx"/>
    <property type="match status" value="1"/>
</dbReference>
<dbReference type="SUPFAM" id="SSF81321">
    <property type="entry name" value="Family A G protein-coupled receptor-like"/>
    <property type="match status" value="1"/>
</dbReference>
<dbReference type="PROSITE" id="PS00237">
    <property type="entry name" value="G_PROTEIN_RECEP_F1_1"/>
    <property type="match status" value="1"/>
</dbReference>
<dbReference type="PROSITE" id="PS50262">
    <property type="entry name" value="G_PROTEIN_RECEP_F1_2"/>
    <property type="match status" value="1"/>
</dbReference>
<dbReference type="PROSITE" id="PS00238">
    <property type="entry name" value="OPSIN"/>
    <property type="match status" value="1"/>
</dbReference>
<feature type="chain" id="PRO_0000197798" description="Long-wave-sensitive opsin 1">
    <location>
        <begin position="1"/>
        <end position="364"/>
    </location>
</feature>
<feature type="topological domain" description="Extracellular" evidence="3">
    <location>
        <begin position="1"/>
        <end position="58"/>
    </location>
</feature>
<feature type="transmembrane region" description="Helical; Name=1" evidence="3">
    <location>
        <begin position="59"/>
        <end position="79"/>
    </location>
</feature>
<feature type="topological domain" description="Cytoplasmic" evidence="3">
    <location>
        <begin position="80"/>
        <end position="90"/>
    </location>
</feature>
<feature type="transmembrane region" description="Helical; Name=2" evidence="3">
    <location>
        <begin position="91"/>
        <end position="111"/>
    </location>
</feature>
<feature type="topological domain" description="Extracellular" evidence="3">
    <location>
        <begin position="112"/>
        <end position="126"/>
    </location>
</feature>
<feature type="transmembrane region" description="Helical; Name=3" evidence="3">
    <location>
        <begin position="127"/>
        <end position="147"/>
    </location>
</feature>
<feature type="topological domain" description="Cytoplasmic" evidence="3">
    <location>
        <begin position="148"/>
        <end position="168"/>
    </location>
</feature>
<feature type="transmembrane region" description="Helical; Name=4" evidence="3">
    <location>
        <begin position="169"/>
        <end position="189"/>
    </location>
</feature>
<feature type="topological domain" description="Extracellular" evidence="3">
    <location>
        <begin position="190"/>
        <end position="219"/>
    </location>
</feature>
<feature type="transmembrane region" description="Helical; Name=5" evidence="3">
    <location>
        <begin position="220"/>
        <end position="240"/>
    </location>
</feature>
<feature type="topological domain" description="Cytoplasmic" evidence="3">
    <location>
        <begin position="241"/>
        <end position="269"/>
    </location>
</feature>
<feature type="transmembrane region" description="Helical; Name=6" evidence="3">
    <location>
        <begin position="270"/>
        <end position="290"/>
    </location>
</feature>
<feature type="topological domain" description="Extracellular" evidence="3">
    <location>
        <begin position="291"/>
        <end position="301"/>
    </location>
</feature>
<feature type="transmembrane region" description="Helical; Name=7" evidence="3">
    <location>
        <begin position="302"/>
        <end position="324"/>
    </location>
</feature>
<feature type="topological domain" description="Cytoplasmic" evidence="3">
    <location>
        <begin position="325"/>
        <end position="364"/>
    </location>
</feature>
<feature type="modified residue" description="N6-(retinylidene)lysine" evidence="1">
    <location>
        <position position="312"/>
    </location>
</feature>
<feature type="glycosylation site" description="O-linked (GlcNAc) serine" evidence="2">
    <location>
        <position position="22"/>
    </location>
</feature>
<feature type="glycosylation site" description="N-linked (GlcNAc...) asparagine" evidence="3">
    <location>
        <position position="34"/>
    </location>
</feature>
<feature type="disulfide bond" evidence="4">
    <location>
        <begin position="126"/>
        <end position="203"/>
    </location>
</feature>
<feature type="sequence conflict" description="In Ref. 2; AAB86633." evidence="5" ref="2">
    <original>S</original>
    <variation>G</variation>
    <location>
        <position position="192"/>
    </location>
</feature>
<feature type="sequence conflict" description="In Ref. 2; AAB86633." evidence="5" ref="2">
    <original>I</original>
    <variation>N</variation>
    <location>
        <position position="230"/>
    </location>
</feature>
<reference key="1">
    <citation type="journal article" date="2005" name="Nature">
        <title>Genome sequence, comparative analysis and haplotype structure of the domestic dog.</title>
        <authorList>
            <person name="Lindblad-Toh K."/>
            <person name="Wade C.M."/>
            <person name="Mikkelsen T.S."/>
            <person name="Karlsson E.K."/>
            <person name="Jaffe D.B."/>
            <person name="Kamal M."/>
            <person name="Clamp M."/>
            <person name="Chang J.L."/>
            <person name="Kulbokas E.J. III"/>
            <person name="Zody M.C."/>
            <person name="Mauceli E."/>
            <person name="Xie X."/>
            <person name="Breen M."/>
            <person name="Wayne R.K."/>
            <person name="Ostrander E.A."/>
            <person name="Ponting C.P."/>
            <person name="Galibert F."/>
            <person name="Smith D.R."/>
            <person name="deJong P.J."/>
            <person name="Kirkness E.F."/>
            <person name="Alvarez P."/>
            <person name="Biagi T."/>
            <person name="Brockman W."/>
            <person name="Butler J."/>
            <person name="Chin C.-W."/>
            <person name="Cook A."/>
            <person name="Cuff J."/>
            <person name="Daly M.J."/>
            <person name="DeCaprio D."/>
            <person name="Gnerre S."/>
            <person name="Grabherr M."/>
            <person name="Kellis M."/>
            <person name="Kleber M."/>
            <person name="Bardeleben C."/>
            <person name="Goodstadt L."/>
            <person name="Heger A."/>
            <person name="Hitte C."/>
            <person name="Kim L."/>
            <person name="Koepfli K.-P."/>
            <person name="Parker H.G."/>
            <person name="Pollinger J.P."/>
            <person name="Searle S.M.J."/>
            <person name="Sutter N.B."/>
            <person name="Thomas R."/>
            <person name="Webber C."/>
            <person name="Baldwin J."/>
            <person name="Abebe A."/>
            <person name="Abouelleil A."/>
            <person name="Aftuck L."/>
            <person name="Ait-Zahra M."/>
            <person name="Aldredge T."/>
            <person name="Allen N."/>
            <person name="An P."/>
            <person name="Anderson S."/>
            <person name="Antoine C."/>
            <person name="Arachchi H."/>
            <person name="Aslam A."/>
            <person name="Ayotte L."/>
            <person name="Bachantsang P."/>
            <person name="Barry A."/>
            <person name="Bayul T."/>
            <person name="Benamara M."/>
            <person name="Berlin A."/>
            <person name="Bessette D."/>
            <person name="Blitshteyn B."/>
            <person name="Bloom T."/>
            <person name="Blye J."/>
            <person name="Boguslavskiy L."/>
            <person name="Bonnet C."/>
            <person name="Boukhgalter B."/>
            <person name="Brown A."/>
            <person name="Cahill P."/>
            <person name="Calixte N."/>
            <person name="Camarata J."/>
            <person name="Cheshatsang Y."/>
            <person name="Chu J."/>
            <person name="Citroen M."/>
            <person name="Collymore A."/>
            <person name="Cooke P."/>
            <person name="Dawoe T."/>
            <person name="Daza R."/>
            <person name="Decktor K."/>
            <person name="DeGray S."/>
            <person name="Dhargay N."/>
            <person name="Dooley K."/>
            <person name="Dooley K."/>
            <person name="Dorje P."/>
            <person name="Dorjee K."/>
            <person name="Dorris L."/>
            <person name="Duffey N."/>
            <person name="Dupes A."/>
            <person name="Egbiremolen O."/>
            <person name="Elong R."/>
            <person name="Falk J."/>
            <person name="Farina A."/>
            <person name="Faro S."/>
            <person name="Ferguson D."/>
            <person name="Ferreira P."/>
            <person name="Fisher S."/>
            <person name="FitzGerald M."/>
            <person name="Foley K."/>
            <person name="Foley C."/>
            <person name="Franke A."/>
            <person name="Friedrich D."/>
            <person name="Gage D."/>
            <person name="Garber M."/>
            <person name="Gearin G."/>
            <person name="Giannoukos G."/>
            <person name="Goode T."/>
            <person name="Goyette A."/>
            <person name="Graham J."/>
            <person name="Grandbois E."/>
            <person name="Gyaltsen K."/>
            <person name="Hafez N."/>
            <person name="Hagopian D."/>
            <person name="Hagos B."/>
            <person name="Hall J."/>
            <person name="Healy C."/>
            <person name="Hegarty R."/>
            <person name="Honan T."/>
            <person name="Horn A."/>
            <person name="Houde N."/>
            <person name="Hughes L."/>
            <person name="Hunnicutt L."/>
            <person name="Husby M."/>
            <person name="Jester B."/>
            <person name="Jones C."/>
            <person name="Kamat A."/>
            <person name="Kanga B."/>
            <person name="Kells C."/>
            <person name="Khazanovich D."/>
            <person name="Kieu A.C."/>
            <person name="Kisner P."/>
            <person name="Kumar M."/>
            <person name="Lance K."/>
            <person name="Landers T."/>
            <person name="Lara M."/>
            <person name="Lee W."/>
            <person name="Leger J.-P."/>
            <person name="Lennon N."/>
            <person name="Leuper L."/>
            <person name="LeVine S."/>
            <person name="Liu J."/>
            <person name="Liu X."/>
            <person name="Lokyitsang Y."/>
            <person name="Lokyitsang T."/>
            <person name="Lui A."/>
            <person name="Macdonald J."/>
            <person name="Major J."/>
            <person name="Marabella R."/>
            <person name="Maru K."/>
            <person name="Matthews C."/>
            <person name="McDonough S."/>
            <person name="Mehta T."/>
            <person name="Meldrim J."/>
            <person name="Melnikov A."/>
            <person name="Meneus L."/>
            <person name="Mihalev A."/>
            <person name="Mihova T."/>
            <person name="Miller K."/>
            <person name="Mittelman R."/>
            <person name="Mlenga V."/>
            <person name="Mulrain L."/>
            <person name="Munson G."/>
            <person name="Navidi A."/>
            <person name="Naylor J."/>
            <person name="Nguyen T."/>
            <person name="Nguyen N."/>
            <person name="Nguyen C."/>
            <person name="Nguyen T."/>
            <person name="Nicol R."/>
            <person name="Norbu N."/>
            <person name="Norbu C."/>
            <person name="Novod N."/>
            <person name="Nyima T."/>
            <person name="Olandt P."/>
            <person name="O'Neill B."/>
            <person name="O'Neill K."/>
            <person name="Osman S."/>
            <person name="Oyono L."/>
            <person name="Patti C."/>
            <person name="Perrin D."/>
            <person name="Phunkhang P."/>
            <person name="Pierre F."/>
            <person name="Priest M."/>
            <person name="Rachupka A."/>
            <person name="Raghuraman S."/>
            <person name="Rameau R."/>
            <person name="Ray V."/>
            <person name="Raymond C."/>
            <person name="Rege F."/>
            <person name="Rise C."/>
            <person name="Rogers J."/>
            <person name="Rogov P."/>
            <person name="Sahalie J."/>
            <person name="Settipalli S."/>
            <person name="Sharpe T."/>
            <person name="Shea T."/>
            <person name="Sheehan M."/>
            <person name="Sherpa N."/>
            <person name="Shi J."/>
            <person name="Shih D."/>
            <person name="Sloan J."/>
            <person name="Smith C."/>
            <person name="Sparrow T."/>
            <person name="Stalker J."/>
            <person name="Stange-Thomann N."/>
            <person name="Stavropoulos S."/>
            <person name="Stone C."/>
            <person name="Stone S."/>
            <person name="Sykes S."/>
            <person name="Tchuinga P."/>
            <person name="Tenzing P."/>
            <person name="Tesfaye S."/>
            <person name="Thoulutsang D."/>
            <person name="Thoulutsang Y."/>
            <person name="Topham K."/>
            <person name="Topping I."/>
            <person name="Tsamla T."/>
            <person name="Vassiliev H."/>
            <person name="Venkataraman V."/>
            <person name="Vo A."/>
            <person name="Wangchuk T."/>
            <person name="Wangdi T."/>
            <person name="Weiand M."/>
            <person name="Wilkinson J."/>
            <person name="Wilson A."/>
            <person name="Yadav S."/>
            <person name="Yang S."/>
            <person name="Yang X."/>
            <person name="Young G."/>
            <person name="Yu Q."/>
            <person name="Zainoun J."/>
            <person name="Zembek L."/>
            <person name="Zimmer A."/>
            <person name="Lander E.S."/>
        </authorList>
    </citation>
    <scope>NUCLEOTIDE SEQUENCE [LARGE SCALE GENOMIC DNA]</scope>
    <source>
        <strain>Boxer</strain>
    </source>
</reference>
<reference key="2">
    <citation type="journal article" date="1998" name="Mol. Biol. Evol.">
        <title>The 'five-sites' rule and the evolution of red and green color vision in mammals.</title>
        <authorList>
            <person name="Yokoyama S."/>
            <person name="Radlwimmer F.B."/>
        </authorList>
    </citation>
    <scope>NUCLEOTIDE SEQUENCE [MRNA] OF 48-320</scope>
</reference>
<gene>
    <name type="primary">OPN1LW</name>
    <name type="synonym">RCP</name>
</gene>
<proteinExistence type="evidence at transcript level"/>
<comment type="function">
    <text>Visual pigments are the light-absorbing molecules that mediate vision. They consist of an apoprotein, opsin, covalently linked to cis-retinal.</text>
</comment>
<comment type="subcellular location">
    <subcellularLocation>
        <location>Membrane</location>
        <topology>Multi-pass membrane protein</topology>
    </subcellularLocation>
</comment>
<comment type="tissue specificity">
    <text>The three color pigments are found in the cone photoreceptor cells.</text>
</comment>
<comment type="PTM">
    <text>Phosphorylated on some or all of the serine and threonine residues present in the C-terminal region.</text>
</comment>
<comment type="similarity">
    <text evidence="4">Belongs to the G-protein coupled receptor 1 family. Opsin subfamily.</text>
</comment>
<name>OPSR_CANLF</name>
<evidence type="ECO:0000250" key="1"/>
<evidence type="ECO:0000250" key="2">
    <source>
        <dbReference type="UniProtKB" id="Q9BGI7"/>
    </source>
</evidence>
<evidence type="ECO:0000255" key="3"/>
<evidence type="ECO:0000255" key="4">
    <source>
        <dbReference type="PROSITE-ProRule" id="PRU00521"/>
    </source>
</evidence>
<evidence type="ECO:0000305" key="5"/>